<dbReference type="EMBL" id="AL360314">
    <property type="protein sequence ID" value="CAB96658.1"/>
    <property type="molecule type" value="Genomic_DNA"/>
</dbReference>
<dbReference type="EMBL" id="CP002688">
    <property type="protein sequence ID" value="AED91650.1"/>
    <property type="molecule type" value="Genomic_DNA"/>
</dbReference>
<dbReference type="RefSeq" id="NP_196684.1">
    <property type="nucleotide sequence ID" value="NM_121161.3"/>
</dbReference>
<dbReference type="SMR" id="Q9LFN3"/>
<dbReference type="FunCoup" id="Q9LFN3">
    <property type="interactions" value="13"/>
</dbReference>
<dbReference type="PaxDb" id="3702-AT5G11230.1"/>
<dbReference type="ProteomicsDB" id="248841"/>
<dbReference type="EnsemblPlants" id="AT5G11230.1">
    <property type="protein sequence ID" value="AT5G11230.1"/>
    <property type="gene ID" value="AT5G11230"/>
</dbReference>
<dbReference type="GeneID" id="830993"/>
<dbReference type="Gramene" id="AT5G11230.1">
    <property type="protein sequence ID" value="AT5G11230.1"/>
    <property type="gene ID" value="AT5G11230"/>
</dbReference>
<dbReference type="KEGG" id="ath:AT5G11230"/>
<dbReference type="Araport" id="AT5G11230"/>
<dbReference type="TAIR" id="AT5G11230">
    <property type="gene designation" value="UAFT2"/>
</dbReference>
<dbReference type="eggNOG" id="KOG1441">
    <property type="taxonomic scope" value="Eukaryota"/>
</dbReference>
<dbReference type="HOGENOM" id="CLU_022332_3_0_1"/>
<dbReference type="InParanoid" id="Q9LFN3"/>
<dbReference type="OMA" id="MARYTTM"/>
<dbReference type="OrthoDB" id="6418713at2759"/>
<dbReference type="PhylomeDB" id="Q9LFN3"/>
<dbReference type="PRO" id="PR:Q9LFN3"/>
<dbReference type="Proteomes" id="UP000006548">
    <property type="component" value="Chromosome 5"/>
</dbReference>
<dbReference type="ExpressionAtlas" id="Q9LFN3">
    <property type="expression patterns" value="baseline and differential"/>
</dbReference>
<dbReference type="GO" id="GO:0005768">
    <property type="term" value="C:endosome"/>
    <property type="evidence" value="ECO:0007005"/>
    <property type="project" value="TAIR"/>
</dbReference>
<dbReference type="GO" id="GO:0005794">
    <property type="term" value="C:Golgi apparatus"/>
    <property type="evidence" value="ECO:0007005"/>
    <property type="project" value="TAIR"/>
</dbReference>
<dbReference type="GO" id="GO:0000138">
    <property type="term" value="C:Golgi trans cisterna"/>
    <property type="evidence" value="ECO:0007005"/>
    <property type="project" value="TAIR"/>
</dbReference>
<dbReference type="GO" id="GO:0016020">
    <property type="term" value="C:membrane"/>
    <property type="evidence" value="ECO:0007669"/>
    <property type="project" value="UniProtKB-SubCell"/>
</dbReference>
<dbReference type="GO" id="GO:0005802">
    <property type="term" value="C:trans-Golgi network"/>
    <property type="evidence" value="ECO:0007005"/>
    <property type="project" value="TAIR"/>
</dbReference>
<dbReference type="InterPro" id="IPR004853">
    <property type="entry name" value="Sugar_P_trans_dom"/>
</dbReference>
<dbReference type="InterPro" id="IPR050186">
    <property type="entry name" value="TPT_transporter"/>
</dbReference>
<dbReference type="PANTHER" id="PTHR11132">
    <property type="entry name" value="SOLUTE CARRIER FAMILY 35"/>
    <property type="match status" value="1"/>
</dbReference>
<dbReference type="Pfam" id="PF03151">
    <property type="entry name" value="TPT"/>
    <property type="match status" value="1"/>
</dbReference>
<dbReference type="SUPFAM" id="SSF103481">
    <property type="entry name" value="Multidrug resistance efflux transporter EmrE"/>
    <property type="match status" value="1"/>
</dbReference>
<name>PT511_ARATH</name>
<gene>
    <name type="ordered locus">At5g11230</name>
    <name type="ORF">F2I11.120</name>
</gene>
<sequence length="351" mass="39270">MGKGGALSESVIKNIVLSYSYVAIWIFLSFTVIVYNKYILDKKMYNWPFPISLTMIHMSFCSTLAFLIIKVFKFVEPVKMTRETYLRSVVPIGALYALSLWLSNSAYIYLSVSFIQMLKALMPVAVYSIGVLFKKEGFKSDTMMNMLSISFGVAIAAYGEARFDVWGVILQLGAVAFEATRLVLIQILLGDKGIKLNPITSLYYVAPCCLAFLFIPWIYVEFPVLRDTSSFHLDYAIFGANSFCAFALNLAVFLLVGKTSALTMNVAGVVKDWLLIAFSWSVIKDTVTPINLFGYGIAFLGVAYYNHAKLQALKAKEEEKKKIQQADEESGRLLEEREGDVEGKKNDQSGN</sequence>
<feature type="chain" id="PRO_0000406117" description="Probable sugar phosphate/phosphate translocator At5g11230">
    <location>
        <begin position="1"/>
        <end position="351"/>
    </location>
</feature>
<feature type="transmembrane region" description="Helical" evidence="1">
    <location>
        <begin position="15"/>
        <end position="35"/>
    </location>
</feature>
<feature type="transmembrane region" description="Helical" evidence="1">
    <location>
        <begin position="49"/>
        <end position="69"/>
    </location>
</feature>
<feature type="transmembrane region" description="Helical" evidence="1">
    <location>
        <begin position="89"/>
        <end position="109"/>
    </location>
</feature>
<feature type="transmembrane region" description="Helical" evidence="1">
    <location>
        <begin position="113"/>
        <end position="133"/>
    </location>
</feature>
<feature type="transmembrane region" description="Helical" evidence="1">
    <location>
        <begin position="141"/>
        <end position="161"/>
    </location>
</feature>
<feature type="transmembrane region" description="Helical" evidence="1">
    <location>
        <begin position="165"/>
        <end position="185"/>
    </location>
</feature>
<feature type="transmembrane region" description="Helical" evidence="1">
    <location>
        <begin position="205"/>
        <end position="225"/>
    </location>
</feature>
<feature type="transmembrane region" description="Helical" evidence="1">
    <location>
        <begin position="236"/>
        <end position="256"/>
    </location>
</feature>
<feature type="transmembrane region" description="Helical" evidence="1">
    <location>
        <begin position="263"/>
        <end position="283"/>
    </location>
</feature>
<feature type="transmembrane region" description="Helical" evidence="1">
    <location>
        <begin position="286"/>
        <end position="306"/>
    </location>
</feature>
<feature type="domain" description="EamA">
    <location>
        <begin position="38"/>
        <end position="156"/>
    </location>
</feature>
<feature type="region of interest" description="Disordered" evidence="2">
    <location>
        <begin position="321"/>
        <end position="351"/>
    </location>
</feature>
<keyword id="KW-0472">Membrane</keyword>
<keyword id="KW-1185">Reference proteome</keyword>
<keyword id="KW-0762">Sugar transport</keyword>
<keyword id="KW-0812">Transmembrane</keyword>
<keyword id="KW-1133">Transmembrane helix</keyword>
<keyword id="KW-0813">Transport</keyword>
<proteinExistence type="evidence at transcript level"/>
<reference key="1">
    <citation type="journal article" date="2000" name="Nature">
        <title>Sequence and analysis of chromosome 5 of the plant Arabidopsis thaliana.</title>
        <authorList>
            <person name="Tabata S."/>
            <person name="Kaneko T."/>
            <person name="Nakamura Y."/>
            <person name="Kotani H."/>
            <person name="Kato T."/>
            <person name="Asamizu E."/>
            <person name="Miyajima N."/>
            <person name="Sasamoto S."/>
            <person name="Kimura T."/>
            <person name="Hosouchi T."/>
            <person name="Kawashima K."/>
            <person name="Kohara M."/>
            <person name="Matsumoto M."/>
            <person name="Matsuno A."/>
            <person name="Muraki A."/>
            <person name="Nakayama S."/>
            <person name="Nakazaki N."/>
            <person name="Naruo K."/>
            <person name="Okumura S."/>
            <person name="Shinpo S."/>
            <person name="Takeuchi C."/>
            <person name="Wada T."/>
            <person name="Watanabe A."/>
            <person name="Yamada M."/>
            <person name="Yasuda M."/>
            <person name="Sato S."/>
            <person name="de la Bastide M."/>
            <person name="Huang E."/>
            <person name="Spiegel L."/>
            <person name="Gnoj L."/>
            <person name="O'Shaughnessy A."/>
            <person name="Preston R."/>
            <person name="Habermann K."/>
            <person name="Murray J."/>
            <person name="Johnson D."/>
            <person name="Rohlfing T."/>
            <person name="Nelson J."/>
            <person name="Stoneking T."/>
            <person name="Pepin K."/>
            <person name="Spieth J."/>
            <person name="Sekhon M."/>
            <person name="Armstrong J."/>
            <person name="Becker M."/>
            <person name="Belter E."/>
            <person name="Cordum H."/>
            <person name="Cordes M."/>
            <person name="Courtney L."/>
            <person name="Courtney W."/>
            <person name="Dante M."/>
            <person name="Du H."/>
            <person name="Edwards J."/>
            <person name="Fryman J."/>
            <person name="Haakensen B."/>
            <person name="Lamar E."/>
            <person name="Latreille P."/>
            <person name="Leonard S."/>
            <person name="Meyer R."/>
            <person name="Mulvaney E."/>
            <person name="Ozersky P."/>
            <person name="Riley A."/>
            <person name="Strowmatt C."/>
            <person name="Wagner-McPherson C."/>
            <person name="Wollam A."/>
            <person name="Yoakum M."/>
            <person name="Bell M."/>
            <person name="Dedhia N."/>
            <person name="Parnell L."/>
            <person name="Shah R."/>
            <person name="Rodriguez M."/>
            <person name="Hoon See L."/>
            <person name="Vil D."/>
            <person name="Baker J."/>
            <person name="Kirchoff K."/>
            <person name="Toth K."/>
            <person name="King L."/>
            <person name="Bahret A."/>
            <person name="Miller B."/>
            <person name="Marra M.A."/>
            <person name="Martienssen R."/>
            <person name="McCombie W.R."/>
            <person name="Wilson R.K."/>
            <person name="Murphy G."/>
            <person name="Bancroft I."/>
            <person name="Volckaert G."/>
            <person name="Wambutt R."/>
            <person name="Duesterhoeft A."/>
            <person name="Stiekema W."/>
            <person name="Pohl T."/>
            <person name="Entian K.-D."/>
            <person name="Terryn N."/>
            <person name="Hartley N."/>
            <person name="Bent E."/>
            <person name="Johnson S."/>
            <person name="Langham S.-A."/>
            <person name="McCullagh B."/>
            <person name="Robben J."/>
            <person name="Grymonprez B."/>
            <person name="Zimmermann W."/>
            <person name="Ramsperger U."/>
            <person name="Wedler H."/>
            <person name="Balke K."/>
            <person name="Wedler E."/>
            <person name="Peters S."/>
            <person name="van Staveren M."/>
            <person name="Dirkse W."/>
            <person name="Mooijman P."/>
            <person name="Klein Lankhorst R."/>
            <person name="Weitzenegger T."/>
            <person name="Bothe G."/>
            <person name="Rose M."/>
            <person name="Hauf J."/>
            <person name="Berneiser S."/>
            <person name="Hempel S."/>
            <person name="Feldpausch M."/>
            <person name="Lamberth S."/>
            <person name="Villarroel R."/>
            <person name="Gielen J."/>
            <person name="Ardiles W."/>
            <person name="Bents O."/>
            <person name="Lemcke K."/>
            <person name="Kolesov G."/>
            <person name="Mayer K.F.X."/>
            <person name="Rudd S."/>
            <person name="Schoof H."/>
            <person name="Schueller C."/>
            <person name="Zaccaria P."/>
            <person name="Mewes H.-W."/>
            <person name="Bevan M."/>
            <person name="Fransz P.F."/>
        </authorList>
    </citation>
    <scope>NUCLEOTIDE SEQUENCE [LARGE SCALE GENOMIC DNA]</scope>
    <source>
        <strain>cv. Columbia</strain>
    </source>
</reference>
<reference key="2">
    <citation type="journal article" date="2017" name="Plant J.">
        <title>Araport11: a complete reannotation of the Arabidopsis thaliana reference genome.</title>
        <authorList>
            <person name="Cheng C.Y."/>
            <person name="Krishnakumar V."/>
            <person name="Chan A.P."/>
            <person name="Thibaud-Nissen F."/>
            <person name="Schobel S."/>
            <person name="Town C.D."/>
        </authorList>
    </citation>
    <scope>GENOME REANNOTATION</scope>
    <source>
        <strain>cv. Columbia</strain>
    </source>
</reference>
<reference key="3">
    <citation type="journal article" date="2014" name="Proc. Natl. Acad. Sci. U.S.A.">
        <title>The Golgi localized bifunctional UDP-rhamnose/UDP-galactose transporter family of Arabidopsis.</title>
        <authorList>
            <person name="Rautengarten C."/>
            <person name="Ebert B."/>
            <person name="Moreno I."/>
            <person name="Temple H."/>
            <person name="Herter T."/>
            <person name="Link B."/>
            <person name="Donas-Cofre D."/>
            <person name="Moreno A."/>
            <person name="Saez-Aguayo S."/>
            <person name="Blanco F."/>
            <person name="Mortimer J.C."/>
            <person name="Schultink A."/>
            <person name="Reiter W.D."/>
            <person name="Dupree P."/>
            <person name="Pauly M."/>
            <person name="Heazlewood J.L."/>
            <person name="Scheller H.V."/>
            <person name="Orellana A."/>
        </authorList>
    </citation>
    <scope>GENE FAMILY</scope>
</reference>
<accession>Q9LFN3</accession>
<evidence type="ECO:0000255" key="1"/>
<evidence type="ECO:0000256" key="2">
    <source>
        <dbReference type="SAM" id="MobiDB-lite"/>
    </source>
</evidence>
<evidence type="ECO:0000305" key="3"/>
<organism>
    <name type="scientific">Arabidopsis thaliana</name>
    <name type="common">Mouse-ear cress</name>
    <dbReference type="NCBI Taxonomy" id="3702"/>
    <lineage>
        <taxon>Eukaryota</taxon>
        <taxon>Viridiplantae</taxon>
        <taxon>Streptophyta</taxon>
        <taxon>Embryophyta</taxon>
        <taxon>Tracheophyta</taxon>
        <taxon>Spermatophyta</taxon>
        <taxon>Magnoliopsida</taxon>
        <taxon>eudicotyledons</taxon>
        <taxon>Gunneridae</taxon>
        <taxon>Pentapetalae</taxon>
        <taxon>rosids</taxon>
        <taxon>malvids</taxon>
        <taxon>Brassicales</taxon>
        <taxon>Brassicaceae</taxon>
        <taxon>Camelineae</taxon>
        <taxon>Arabidopsis</taxon>
    </lineage>
</organism>
<comment type="subcellular location">
    <subcellularLocation>
        <location evidence="3">Membrane</location>
        <topology evidence="3">Multi-pass membrane protein</topology>
    </subcellularLocation>
</comment>
<comment type="similarity">
    <text evidence="3">Belongs to the TPT transporter family. TPT (TC 2.A.7.9) subfamily.</text>
</comment>
<protein>
    <recommendedName>
        <fullName>Probable sugar phosphate/phosphate translocator At5g11230</fullName>
    </recommendedName>
</protein>